<name>CPI4_SOLTU</name>
<protein>
    <recommendedName>
        <fullName>Cysteine protease inhibitor 4</fullName>
    </recommendedName>
    <alternativeName>
        <fullName>PCPI-23</fullName>
    </alternativeName>
</protein>
<evidence type="ECO:0000250" key="1"/>
<evidence type="ECO:0000305" key="2"/>
<reference key="1">
    <citation type="journal article" date="1998" name="FEBS Lett.">
        <title>Kunitz-type proteinase inhibitors from intact and Phytophthora-infected potato tubers.</title>
        <authorList>
            <person name="Valueva T.A."/>
            <person name="Revina T.A."/>
            <person name="Kladnitskaya G.V."/>
            <person name="Mosolov V.V."/>
        </authorList>
    </citation>
    <scope>PROTEIN SEQUENCE OF N-TERMINUS</scope>
    <source>
        <strain>cv. Istrinskii</strain>
    </source>
</reference>
<feature type="chain" id="PRO_0000083316" description="Cysteine protease inhibitor 4">
    <location>
        <begin position="1"/>
        <end position="22" status="greater than"/>
    </location>
</feature>
<feature type="non-terminal residue">
    <location>
        <position position="22"/>
    </location>
</feature>
<organism>
    <name type="scientific">Solanum tuberosum</name>
    <name type="common">Potato</name>
    <dbReference type="NCBI Taxonomy" id="4113"/>
    <lineage>
        <taxon>Eukaryota</taxon>
        <taxon>Viridiplantae</taxon>
        <taxon>Streptophyta</taxon>
        <taxon>Embryophyta</taxon>
        <taxon>Tracheophyta</taxon>
        <taxon>Spermatophyta</taxon>
        <taxon>Magnoliopsida</taxon>
        <taxon>eudicotyledons</taxon>
        <taxon>Gunneridae</taxon>
        <taxon>Pentapetalae</taxon>
        <taxon>asterids</taxon>
        <taxon>lamiids</taxon>
        <taxon>Solanales</taxon>
        <taxon>Solanaceae</taxon>
        <taxon>Solanoideae</taxon>
        <taxon>Solaneae</taxon>
        <taxon>Solanum</taxon>
    </lineage>
</organism>
<accession>P58602</accession>
<keyword id="KW-0903">Direct protein sequencing</keyword>
<keyword id="KW-0646">Protease inhibitor</keyword>
<keyword id="KW-1185">Reference proteome</keyword>
<keyword id="KW-0789">Thiol protease inhibitor</keyword>
<keyword id="KW-0926">Vacuole</keyword>
<sequence length="22" mass="2520">PVLQVVRDIHGDILTPDSRYIL</sequence>
<comment type="function">
    <text>Inhibitor of papain (cysteine protease). Does not inhibit trypsin, chymotrypsin nor elastase (serine proteases). May protect the plant by inhibiting proteases of invading organisms.</text>
</comment>
<comment type="subcellular location">
    <subcellularLocation>
        <location evidence="1">Vacuole</location>
    </subcellularLocation>
</comment>
<comment type="tissue specificity">
    <text>Tubers.</text>
</comment>
<comment type="miscellaneous">
    <text>Does not accumulate in tubers infected with Phytophthora infestans.</text>
</comment>
<comment type="miscellaneous">
    <text>Has a single chain structure.</text>
</comment>
<comment type="similarity">
    <text evidence="2">Belongs to the protease inhibitor I3 (leguminous Kunitz-type inhibitor) family.</text>
</comment>
<dbReference type="STRING" id="4113.P58602"/>
<dbReference type="PaxDb" id="4113-PGSC0003DMT400026364"/>
<dbReference type="ProMEX" id="P58602"/>
<dbReference type="eggNOG" id="ENOG502R8RB">
    <property type="taxonomic scope" value="Eukaryota"/>
</dbReference>
<dbReference type="InParanoid" id="P58602"/>
<dbReference type="Proteomes" id="UP000011115">
    <property type="component" value="Unassembled WGS sequence"/>
</dbReference>
<dbReference type="GO" id="GO:0005773">
    <property type="term" value="C:vacuole"/>
    <property type="evidence" value="ECO:0007669"/>
    <property type="project" value="UniProtKB-SubCell"/>
</dbReference>
<dbReference type="GO" id="GO:0004869">
    <property type="term" value="F:cysteine-type endopeptidase inhibitor activity"/>
    <property type="evidence" value="ECO:0007669"/>
    <property type="project" value="UniProtKB-KW"/>
</dbReference>
<proteinExistence type="evidence at protein level"/>